<gene>
    <name type="primary">rplJ</name>
    <name type="ordered locus">SP_1355</name>
</gene>
<comment type="function">
    <text evidence="1">Forms part of the ribosomal stalk, playing a central role in the interaction of the ribosome with GTP-bound translation factors.</text>
</comment>
<comment type="subunit">
    <text evidence="1">Part of the ribosomal stalk of the 50S ribosomal subunit. The N-terminus interacts with L11 and the large rRNA to form the base of the stalk. The C-terminus forms an elongated spine to which L12 dimers bind in a sequential fashion forming a multimeric L10(L12)X complex (By similarity).</text>
</comment>
<comment type="similarity">
    <text evidence="2">Belongs to the universal ribosomal protein uL10 family.</text>
</comment>
<keyword id="KW-1185">Reference proteome</keyword>
<keyword id="KW-0687">Ribonucleoprotein</keyword>
<keyword id="KW-0689">Ribosomal protein</keyword>
<keyword id="KW-0694">RNA-binding</keyword>
<keyword id="KW-0699">rRNA-binding</keyword>
<sequence>MSEAIIAKKAELVDVVAEKMKAAASIVVVDARGLTVEQDTVLRRELRGSEVEYKVIKNSILRRAAEKAGLEDLASVFVGPSAVAFSNEDVIAPAKILNDFSKNAEALEIKGGAIEGAVASKEEILALATLPNREGLLSMLLSVLQAPVRNVALAVKAVAESKEDAA</sequence>
<feature type="initiator methionine" description="Removed" evidence="1">
    <location>
        <position position="1"/>
    </location>
</feature>
<feature type="chain" id="PRO_0000154722" description="Large ribosomal subunit protein uL10">
    <location>
        <begin position="2"/>
        <end position="166"/>
    </location>
</feature>
<accession>P66050</accession>
<accession>Q97Q73</accession>
<proteinExistence type="inferred from homology"/>
<dbReference type="EMBL" id="AE005672">
    <property type="protein sequence ID" value="AAK75453.1"/>
    <property type="molecule type" value="Genomic_DNA"/>
</dbReference>
<dbReference type="PIR" id="D95157">
    <property type="entry name" value="D95157"/>
</dbReference>
<dbReference type="RefSeq" id="WP_001287278.1">
    <property type="nucleotide sequence ID" value="NZ_CP155539.1"/>
</dbReference>
<dbReference type="SMR" id="P66050"/>
<dbReference type="PaxDb" id="170187-SP_1355"/>
<dbReference type="EnsemblBacteria" id="AAK75453">
    <property type="protein sequence ID" value="AAK75453"/>
    <property type="gene ID" value="SP_1355"/>
</dbReference>
<dbReference type="GeneID" id="45653385"/>
<dbReference type="KEGG" id="spn:SP_1355"/>
<dbReference type="eggNOG" id="COG0244">
    <property type="taxonomic scope" value="Bacteria"/>
</dbReference>
<dbReference type="BioCyc" id="SPNE170187:G1FZB-1361-MONOMER"/>
<dbReference type="Proteomes" id="UP000000585">
    <property type="component" value="Chromosome"/>
</dbReference>
<dbReference type="GO" id="GO:0015934">
    <property type="term" value="C:large ribosomal subunit"/>
    <property type="evidence" value="ECO:0007669"/>
    <property type="project" value="InterPro"/>
</dbReference>
<dbReference type="GO" id="GO:0070180">
    <property type="term" value="F:large ribosomal subunit rRNA binding"/>
    <property type="evidence" value="ECO:0007669"/>
    <property type="project" value="UniProtKB-UniRule"/>
</dbReference>
<dbReference type="GO" id="GO:0003735">
    <property type="term" value="F:structural constituent of ribosome"/>
    <property type="evidence" value="ECO:0007669"/>
    <property type="project" value="InterPro"/>
</dbReference>
<dbReference type="GO" id="GO:0006412">
    <property type="term" value="P:translation"/>
    <property type="evidence" value="ECO:0007669"/>
    <property type="project" value="UniProtKB-UniRule"/>
</dbReference>
<dbReference type="CDD" id="cd05797">
    <property type="entry name" value="Ribosomal_L10"/>
    <property type="match status" value="1"/>
</dbReference>
<dbReference type="FunFam" id="3.30.70.1730:FF:000001">
    <property type="entry name" value="50S ribosomal protein L10"/>
    <property type="match status" value="1"/>
</dbReference>
<dbReference type="Gene3D" id="3.30.70.1730">
    <property type="match status" value="1"/>
</dbReference>
<dbReference type="HAMAP" id="MF_00362">
    <property type="entry name" value="Ribosomal_uL10"/>
    <property type="match status" value="1"/>
</dbReference>
<dbReference type="InterPro" id="IPR001790">
    <property type="entry name" value="Ribosomal_uL10"/>
</dbReference>
<dbReference type="InterPro" id="IPR043141">
    <property type="entry name" value="Ribosomal_uL10-like_sf"/>
</dbReference>
<dbReference type="InterPro" id="IPR022973">
    <property type="entry name" value="Ribosomal_uL10_bac"/>
</dbReference>
<dbReference type="InterPro" id="IPR047865">
    <property type="entry name" value="Ribosomal_uL10_bac_type"/>
</dbReference>
<dbReference type="InterPro" id="IPR002363">
    <property type="entry name" value="Ribosomal_uL10_CS_bac"/>
</dbReference>
<dbReference type="NCBIfam" id="NF000955">
    <property type="entry name" value="PRK00099.1-1"/>
    <property type="match status" value="1"/>
</dbReference>
<dbReference type="PANTHER" id="PTHR11560">
    <property type="entry name" value="39S RIBOSOMAL PROTEIN L10, MITOCHONDRIAL"/>
    <property type="match status" value="1"/>
</dbReference>
<dbReference type="Pfam" id="PF00466">
    <property type="entry name" value="Ribosomal_L10"/>
    <property type="match status" value="1"/>
</dbReference>
<dbReference type="SUPFAM" id="SSF160369">
    <property type="entry name" value="Ribosomal protein L10-like"/>
    <property type="match status" value="1"/>
</dbReference>
<dbReference type="PROSITE" id="PS01109">
    <property type="entry name" value="RIBOSOMAL_L10"/>
    <property type="match status" value="1"/>
</dbReference>
<name>RL10_STRPN</name>
<organism>
    <name type="scientific">Streptococcus pneumoniae serotype 4 (strain ATCC BAA-334 / TIGR4)</name>
    <dbReference type="NCBI Taxonomy" id="170187"/>
    <lineage>
        <taxon>Bacteria</taxon>
        <taxon>Bacillati</taxon>
        <taxon>Bacillota</taxon>
        <taxon>Bacilli</taxon>
        <taxon>Lactobacillales</taxon>
        <taxon>Streptococcaceae</taxon>
        <taxon>Streptococcus</taxon>
    </lineage>
</organism>
<reference key="1">
    <citation type="journal article" date="2001" name="Science">
        <title>Complete genome sequence of a virulent isolate of Streptococcus pneumoniae.</title>
        <authorList>
            <person name="Tettelin H."/>
            <person name="Nelson K.E."/>
            <person name="Paulsen I.T."/>
            <person name="Eisen J.A."/>
            <person name="Read T.D."/>
            <person name="Peterson S.N."/>
            <person name="Heidelberg J.F."/>
            <person name="DeBoy R.T."/>
            <person name="Haft D.H."/>
            <person name="Dodson R.J."/>
            <person name="Durkin A.S."/>
            <person name="Gwinn M.L."/>
            <person name="Kolonay J.F."/>
            <person name="Nelson W.C."/>
            <person name="Peterson J.D."/>
            <person name="Umayam L.A."/>
            <person name="White O."/>
            <person name="Salzberg S.L."/>
            <person name="Lewis M.R."/>
            <person name="Radune D."/>
            <person name="Holtzapple E.K."/>
            <person name="Khouri H.M."/>
            <person name="Wolf A.M."/>
            <person name="Utterback T.R."/>
            <person name="Hansen C.L."/>
            <person name="McDonald L.A."/>
            <person name="Feldblyum T.V."/>
            <person name="Angiuoli S.V."/>
            <person name="Dickinson T."/>
            <person name="Hickey E.K."/>
            <person name="Holt I.E."/>
            <person name="Loftus B.J."/>
            <person name="Yang F."/>
            <person name="Smith H.O."/>
            <person name="Venter J.C."/>
            <person name="Dougherty B.A."/>
            <person name="Morrison D.A."/>
            <person name="Hollingshead S.K."/>
            <person name="Fraser C.M."/>
        </authorList>
    </citation>
    <scope>NUCLEOTIDE SEQUENCE [LARGE SCALE GENOMIC DNA]</scope>
    <source>
        <strain>ATCC BAA-334 / TIGR4</strain>
    </source>
</reference>
<evidence type="ECO:0000250" key="1"/>
<evidence type="ECO:0000305" key="2"/>
<protein>
    <recommendedName>
        <fullName evidence="2">Large ribosomal subunit protein uL10</fullName>
    </recommendedName>
    <alternativeName>
        <fullName>50S ribosomal protein L10</fullName>
    </alternativeName>
</protein>